<organism>
    <name type="scientific">Mus musculus</name>
    <name type="common">Mouse</name>
    <dbReference type="NCBI Taxonomy" id="10090"/>
    <lineage>
        <taxon>Eukaryota</taxon>
        <taxon>Metazoa</taxon>
        <taxon>Chordata</taxon>
        <taxon>Craniata</taxon>
        <taxon>Vertebrata</taxon>
        <taxon>Euteleostomi</taxon>
        <taxon>Mammalia</taxon>
        <taxon>Eutheria</taxon>
        <taxon>Euarchontoglires</taxon>
        <taxon>Glires</taxon>
        <taxon>Rodentia</taxon>
        <taxon>Myomorpha</taxon>
        <taxon>Muroidea</taxon>
        <taxon>Muridae</taxon>
        <taxon>Murinae</taxon>
        <taxon>Mus</taxon>
        <taxon>Mus</taxon>
    </lineage>
</organism>
<gene>
    <name type="primary">Dynlrb1</name>
    <name type="synonym">Dncl2a</name>
    <name type="synonym">Dnlc2a</name>
</gene>
<dbReference type="EMBL" id="AK002359">
    <property type="protein sequence ID" value="BAB22038.1"/>
    <property type="molecule type" value="mRNA"/>
</dbReference>
<dbReference type="EMBL" id="AK003435">
    <property type="protein sequence ID" value="BAB22788.1"/>
    <property type="molecule type" value="mRNA"/>
</dbReference>
<dbReference type="EMBL" id="AK008595">
    <property type="protein sequence ID" value="BAB25768.1"/>
    <property type="molecule type" value="mRNA"/>
</dbReference>
<dbReference type="EMBL" id="AK166685">
    <property type="protein sequence ID" value="BAE38944.1"/>
    <property type="molecule type" value="mRNA"/>
</dbReference>
<dbReference type="EMBL" id="AL929588">
    <property type="status" value="NOT_ANNOTATED_CDS"/>
    <property type="molecule type" value="Genomic_DNA"/>
</dbReference>
<dbReference type="EMBL" id="BC099423">
    <property type="protein sequence ID" value="AAH99423.1"/>
    <property type="molecule type" value="mRNA"/>
</dbReference>
<dbReference type="EMBL" id="BC125610">
    <property type="protein sequence ID" value="AAI25611.1"/>
    <property type="molecule type" value="mRNA"/>
</dbReference>
<dbReference type="EMBL" id="BC125648">
    <property type="protein sequence ID" value="AAI25649.1"/>
    <property type="molecule type" value="mRNA"/>
</dbReference>
<dbReference type="CCDS" id="CCDS38294.1"/>
<dbReference type="RefSeq" id="NP_080223.2">
    <property type="nucleotide sequence ID" value="NM_025947.3"/>
</dbReference>
<dbReference type="PDB" id="1Y4O">
    <property type="method" value="NMR"/>
    <property type="chains" value="A/B=2-96"/>
</dbReference>
<dbReference type="PDBsum" id="1Y4O"/>
<dbReference type="BMRB" id="P62627"/>
<dbReference type="SMR" id="P62627"/>
<dbReference type="BioGRID" id="211916">
    <property type="interactions" value="26"/>
</dbReference>
<dbReference type="ComplexPortal" id="CPX-5699">
    <property type="entry name" value="Cytoplasmic dynein complex, variant 1"/>
</dbReference>
<dbReference type="FunCoup" id="P62627">
    <property type="interactions" value="1142"/>
</dbReference>
<dbReference type="IntAct" id="P62627">
    <property type="interactions" value="15"/>
</dbReference>
<dbReference type="MINT" id="P62627"/>
<dbReference type="STRING" id="10090.ENSMUSP00000114928"/>
<dbReference type="GlyGen" id="P62627">
    <property type="glycosylation" value="1 site, 1 O-linked glycan (1 site)"/>
</dbReference>
<dbReference type="iPTMnet" id="P62627"/>
<dbReference type="PhosphoSitePlus" id="P62627"/>
<dbReference type="jPOST" id="P62627"/>
<dbReference type="PaxDb" id="10090-ENSMUSP00000105304"/>
<dbReference type="ProteomicsDB" id="277469"/>
<dbReference type="Pumba" id="P62627"/>
<dbReference type="TopDownProteomics" id="P62627"/>
<dbReference type="Antibodypedia" id="4076">
    <property type="antibodies" value="73 antibodies from 21 providers"/>
</dbReference>
<dbReference type="Ensembl" id="ENSMUST00000109682.9">
    <property type="protein sequence ID" value="ENSMUSP00000105304.3"/>
    <property type="gene ID" value="ENSMUSG00000047459.15"/>
</dbReference>
<dbReference type="GeneID" id="67068"/>
<dbReference type="KEGG" id="mmu:67068"/>
<dbReference type="UCSC" id="uc008nkg.2">
    <property type="organism name" value="mouse"/>
</dbReference>
<dbReference type="AGR" id="MGI:1914318"/>
<dbReference type="CTD" id="83658"/>
<dbReference type="MGI" id="MGI:1914318">
    <property type="gene designation" value="Dynlrb1"/>
</dbReference>
<dbReference type="VEuPathDB" id="HostDB:ENSMUSG00000047459"/>
<dbReference type="eggNOG" id="KOG4115">
    <property type="taxonomic scope" value="Eukaryota"/>
</dbReference>
<dbReference type="GeneTree" id="ENSGT00390000011067"/>
<dbReference type="HOGENOM" id="CLU_113002_3_2_1"/>
<dbReference type="InParanoid" id="P62627"/>
<dbReference type="OMA" id="NNSTIEY"/>
<dbReference type="PhylomeDB" id="P62627"/>
<dbReference type="TreeFam" id="TF315165"/>
<dbReference type="Reactome" id="R-MMU-5620924">
    <property type="pathway name" value="Intraflagellar transport"/>
</dbReference>
<dbReference type="BioGRID-ORCS" id="67068">
    <property type="hits" value="24 hits in 75 CRISPR screens"/>
</dbReference>
<dbReference type="ChiTaRS" id="Dynlrb1">
    <property type="organism name" value="mouse"/>
</dbReference>
<dbReference type="EvolutionaryTrace" id="P62627"/>
<dbReference type="PRO" id="PR:P62627"/>
<dbReference type="Proteomes" id="UP000000589">
    <property type="component" value="Chromosome 2"/>
</dbReference>
<dbReference type="RNAct" id="P62627">
    <property type="molecule type" value="protein"/>
</dbReference>
<dbReference type="Bgee" id="ENSMUSG00000047459">
    <property type="expression patterns" value="Expressed in embryonic brain and 258 other cell types or tissues"/>
</dbReference>
<dbReference type="ExpressionAtlas" id="P62627">
    <property type="expression patterns" value="baseline and differential"/>
</dbReference>
<dbReference type="GO" id="GO:0005813">
    <property type="term" value="C:centrosome"/>
    <property type="evidence" value="ECO:0007669"/>
    <property type="project" value="Ensembl"/>
</dbReference>
<dbReference type="GO" id="GO:0005737">
    <property type="term" value="C:cytoplasm"/>
    <property type="evidence" value="ECO:0000250"/>
    <property type="project" value="UniProtKB"/>
</dbReference>
<dbReference type="GO" id="GO:0005868">
    <property type="term" value="C:cytoplasmic dynein complex"/>
    <property type="evidence" value="ECO:0000314"/>
    <property type="project" value="UniProtKB"/>
</dbReference>
<dbReference type="GO" id="GO:0030286">
    <property type="term" value="C:dynein complex"/>
    <property type="evidence" value="ECO:0000266"/>
    <property type="project" value="ComplexPortal"/>
</dbReference>
<dbReference type="GO" id="GO:0005874">
    <property type="term" value="C:microtubule"/>
    <property type="evidence" value="ECO:0007669"/>
    <property type="project" value="UniProtKB-KW"/>
</dbReference>
<dbReference type="GO" id="GO:0042802">
    <property type="term" value="F:identical protein binding"/>
    <property type="evidence" value="ECO:0000353"/>
    <property type="project" value="UniProtKB"/>
</dbReference>
<dbReference type="GO" id="GO:0007018">
    <property type="term" value="P:microtubule-based movement"/>
    <property type="evidence" value="ECO:0007669"/>
    <property type="project" value="InterPro"/>
</dbReference>
<dbReference type="GO" id="GO:0007632">
    <property type="term" value="P:visual behavior"/>
    <property type="evidence" value="ECO:0000250"/>
    <property type="project" value="UniProtKB"/>
</dbReference>
<dbReference type="FunFam" id="3.30.450.30:FF:000002">
    <property type="entry name" value="Dynein light chain roadblock"/>
    <property type="match status" value="1"/>
</dbReference>
<dbReference type="Gene3D" id="3.30.450.30">
    <property type="entry name" value="Dynein light chain 2a, cytoplasmic"/>
    <property type="match status" value="1"/>
</dbReference>
<dbReference type="InterPro" id="IPR016561">
    <property type="entry name" value="DYNLRB1/2"/>
</dbReference>
<dbReference type="InterPro" id="IPR004942">
    <property type="entry name" value="Roadblock/LAMTOR2_dom"/>
</dbReference>
<dbReference type="PANTHER" id="PTHR10779">
    <property type="entry name" value="DYNEIN LIGHT CHAIN ROADBLOCK"/>
    <property type="match status" value="1"/>
</dbReference>
<dbReference type="Pfam" id="PF03259">
    <property type="entry name" value="Robl_LC7"/>
    <property type="match status" value="1"/>
</dbReference>
<dbReference type="PIRSF" id="PIRSF009998">
    <property type="entry name" value="DLC7"/>
    <property type="match status" value="1"/>
</dbReference>
<dbReference type="SMART" id="SM00960">
    <property type="entry name" value="Robl_LC7"/>
    <property type="match status" value="1"/>
</dbReference>
<dbReference type="SUPFAM" id="SSF103196">
    <property type="entry name" value="Roadblock/LC7 domain"/>
    <property type="match status" value="1"/>
</dbReference>
<feature type="initiator methionine" description="Removed" evidence="1">
    <location>
        <position position="1"/>
    </location>
</feature>
<feature type="chain" id="PRO_0000220956" description="Dynein light chain roadblock-type 1">
    <location>
        <begin position="2"/>
        <end position="96"/>
    </location>
</feature>
<feature type="modified residue" description="N-acetylalanine" evidence="1">
    <location>
        <position position="2"/>
    </location>
</feature>
<feature type="sequence conflict" description="In Ref. 1; BAB25768." evidence="3" ref="1">
    <original>E</original>
    <variation>D</variation>
    <location>
        <position position="3"/>
    </location>
</feature>
<feature type="helix" evidence="4">
    <location>
        <begin position="2"/>
        <end position="13"/>
    </location>
</feature>
<feature type="strand" evidence="4">
    <location>
        <begin position="17"/>
        <end position="24"/>
    </location>
</feature>
<feature type="turn" evidence="4">
    <location>
        <begin position="25"/>
        <end position="27"/>
    </location>
</feature>
<feature type="strand" evidence="4">
    <location>
        <begin position="28"/>
        <end position="34"/>
    </location>
</feature>
<feature type="helix" evidence="4">
    <location>
        <begin position="36"/>
        <end position="60"/>
    </location>
</feature>
<feature type="strand" evidence="4">
    <location>
        <begin position="66"/>
        <end position="75"/>
    </location>
</feature>
<feature type="strand" evidence="4">
    <location>
        <begin position="77"/>
        <end position="82"/>
    </location>
</feature>
<feature type="strand" evidence="4">
    <location>
        <begin position="84"/>
        <end position="92"/>
    </location>
</feature>
<proteinExistence type="evidence at protein level"/>
<comment type="function">
    <text evidence="2">Acts as one of several non-catalytic accessory components of the cytoplasmic dynein 1 complex that are thought to be involved in linking dynein to cargos and to adapter proteins that regulate dynein function. Cytoplasmic dynein 1 acts as a motor for the intracellular retrograde motility of vesicles and organelles along microtubules.</text>
</comment>
<comment type="subunit">
    <text evidence="2">Homodimer. The cytoplasmic dynein 1 complex consists of two catalytic heavy chains (HCs) and a number of non-catalytic subunits presented by intermediate chains (ICs), light intermediate chains (LICs) and light chains (LCs); the composition seems to vary in respect to the IC, LIC and LC composition. The heavy chain homodimer serves as a scaffold for the probable homodimeric assembly of the respective non-catalytic subunits. The ICs and LICs bind directly to the HC dimer and the LCs assemble on the IC dimer. Interacts with DYNLRB2. Interacts with DYNC1I1 and DYNC1I2. Interacts with RAB6A isoform 1 (GTP-bound); the interaction is direct. Interacts with RAB6A isoform 2 (GDP-bound); the interaction is direct. Interacts with RAB6B (GDP-bound).</text>
</comment>
<comment type="subcellular location">
    <subcellularLocation>
        <location evidence="2">Cytoplasm</location>
        <location evidence="2">Cytoskeleton</location>
    </subcellularLocation>
</comment>
<comment type="similarity">
    <text evidence="3">Belongs to the GAMAD family.</text>
</comment>
<keyword id="KW-0002">3D-structure</keyword>
<keyword id="KW-0007">Acetylation</keyword>
<keyword id="KW-0963">Cytoplasm</keyword>
<keyword id="KW-0206">Cytoskeleton</keyword>
<keyword id="KW-0243">Dynein</keyword>
<keyword id="KW-0493">Microtubule</keyword>
<keyword id="KW-0505">Motor protein</keyword>
<keyword id="KW-1185">Reference proteome</keyword>
<keyword id="KW-0813">Transport</keyword>
<reference key="1">
    <citation type="journal article" date="2005" name="Science">
        <title>The transcriptional landscape of the mammalian genome.</title>
        <authorList>
            <person name="Carninci P."/>
            <person name="Kasukawa T."/>
            <person name="Katayama S."/>
            <person name="Gough J."/>
            <person name="Frith M.C."/>
            <person name="Maeda N."/>
            <person name="Oyama R."/>
            <person name="Ravasi T."/>
            <person name="Lenhard B."/>
            <person name="Wells C."/>
            <person name="Kodzius R."/>
            <person name="Shimokawa K."/>
            <person name="Bajic V.B."/>
            <person name="Brenner S.E."/>
            <person name="Batalov S."/>
            <person name="Forrest A.R."/>
            <person name="Zavolan M."/>
            <person name="Davis M.J."/>
            <person name="Wilming L.G."/>
            <person name="Aidinis V."/>
            <person name="Allen J.E."/>
            <person name="Ambesi-Impiombato A."/>
            <person name="Apweiler R."/>
            <person name="Aturaliya R.N."/>
            <person name="Bailey T.L."/>
            <person name="Bansal M."/>
            <person name="Baxter L."/>
            <person name="Beisel K.W."/>
            <person name="Bersano T."/>
            <person name="Bono H."/>
            <person name="Chalk A.M."/>
            <person name="Chiu K.P."/>
            <person name="Choudhary V."/>
            <person name="Christoffels A."/>
            <person name="Clutterbuck D.R."/>
            <person name="Crowe M.L."/>
            <person name="Dalla E."/>
            <person name="Dalrymple B.P."/>
            <person name="de Bono B."/>
            <person name="Della Gatta G."/>
            <person name="di Bernardo D."/>
            <person name="Down T."/>
            <person name="Engstrom P."/>
            <person name="Fagiolini M."/>
            <person name="Faulkner G."/>
            <person name="Fletcher C.F."/>
            <person name="Fukushima T."/>
            <person name="Furuno M."/>
            <person name="Futaki S."/>
            <person name="Gariboldi M."/>
            <person name="Georgii-Hemming P."/>
            <person name="Gingeras T.R."/>
            <person name="Gojobori T."/>
            <person name="Green R.E."/>
            <person name="Gustincich S."/>
            <person name="Harbers M."/>
            <person name="Hayashi Y."/>
            <person name="Hensch T.K."/>
            <person name="Hirokawa N."/>
            <person name="Hill D."/>
            <person name="Huminiecki L."/>
            <person name="Iacono M."/>
            <person name="Ikeo K."/>
            <person name="Iwama A."/>
            <person name="Ishikawa T."/>
            <person name="Jakt M."/>
            <person name="Kanapin A."/>
            <person name="Katoh M."/>
            <person name="Kawasawa Y."/>
            <person name="Kelso J."/>
            <person name="Kitamura H."/>
            <person name="Kitano H."/>
            <person name="Kollias G."/>
            <person name="Krishnan S.P."/>
            <person name="Kruger A."/>
            <person name="Kummerfeld S.K."/>
            <person name="Kurochkin I.V."/>
            <person name="Lareau L.F."/>
            <person name="Lazarevic D."/>
            <person name="Lipovich L."/>
            <person name="Liu J."/>
            <person name="Liuni S."/>
            <person name="McWilliam S."/>
            <person name="Madan Babu M."/>
            <person name="Madera M."/>
            <person name="Marchionni L."/>
            <person name="Matsuda H."/>
            <person name="Matsuzawa S."/>
            <person name="Miki H."/>
            <person name="Mignone F."/>
            <person name="Miyake S."/>
            <person name="Morris K."/>
            <person name="Mottagui-Tabar S."/>
            <person name="Mulder N."/>
            <person name="Nakano N."/>
            <person name="Nakauchi H."/>
            <person name="Ng P."/>
            <person name="Nilsson R."/>
            <person name="Nishiguchi S."/>
            <person name="Nishikawa S."/>
            <person name="Nori F."/>
            <person name="Ohara O."/>
            <person name="Okazaki Y."/>
            <person name="Orlando V."/>
            <person name="Pang K.C."/>
            <person name="Pavan W.J."/>
            <person name="Pavesi G."/>
            <person name="Pesole G."/>
            <person name="Petrovsky N."/>
            <person name="Piazza S."/>
            <person name="Reed J."/>
            <person name="Reid J.F."/>
            <person name="Ring B.Z."/>
            <person name="Ringwald M."/>
            <person name="Rost B."/>
            <person name="Ruan Y."/>
            <person name="Salzberg S.L."/>
            <person name="Sandelin A."/>
            <person name="Schneider C."/>
            <person name="Schoenbach C."/>
            <person name="Sekiguchi K."/>
            <person name="Semple C.A."/>
            <person name="Seno S."/>
            <person name="Sessa L."/>
            <person name="Sheng Y."/>
            <person name="Shibata Y."/>
            <person name="Shimada H."/>
            <person name="Shimada K."/>
            <person name="Silva D."/>
            <person name="Sinclair B."/>
            <person name="Sperling S."/>
            <person name="Stupka E."/>
            <person name="Sugiura K."/>
            <person name="Sultana R."/>
            <person name="Takenaka Y."/>
            <person name="Taki K."/>
            <person name="Tammoja K."/>
            <person name="Tan S.L."/>
            <person name="Tang S."/>
            <person name="Taylor M.S."/>
            <person name="Tegner J."/>
            <person name="Teichmann S.A."/>
            <person name="Ueda H.R."/>
            <person name="van Nimwegen E."/>
            <person name="Verardo R."/>
            <person name="Wei C.L."/>
            <person name="Yagi K."/>
            <person name="Yamanishi H."/>
            <person name="Zabarovsky E."/>
            <person name="Zhu S."/>
            <person name="Zimmer A."/>
            <person name="Hide W."/>
            <person name="Bult C."/>
            <person name="Grimmond S.M."/>
            <person name="Teasdale R.D."/>
            <person name="Liu E.T."/>
            <person name="Brusic V."/>
            <person name="Quackenbush J."/>
            <person name="Wahlestedt C."/>
            <person name="Mattick J.S."/>
            <person name="Hume D.A."/>
            <person name="Kai C."/>
            <person name="Sasaki D."/>
            <person name="Tomaru Y."/>
            <person name="Fukuda S."/>
            <person name="Kanamori-Katayama M."/>
            <person name="Suzuki M."/>
            <person name="Aoki J."/>
            <person name="Arakawa T."/>
            <person name="Iida J."/>
            <person name="Imamura K."/>
            <person name="Itoh M."/>
            <person name="Kato T."/>
            <person name="Kawaji H."/>
            <person name="Kawagashira N."/>
            <person name="Kawashima T."/>
            <person name="Kojima M."/>
            <person name="Kondo S."/>
            <person name="Konno H."/>
            <person name="Nakano K."/>
            <person name="Ninomiya N."/>
            <person name="Nishio T."/>
            <person name="Okada M."/>
            <person name="Plessy C."/>
            <person name="Shibata K."/>
            <person name="Shiraki T."/>
            <person name="Suzuki S."/>
            <person name="Tagami M."/>
            <person name="Waki K."/>
            <person name="Watahiki A."/>
            <person name="Okamura-Oho Y."/>
            <person name="Suzuki H."/>
            <person name="Kawai J."/>
            <person name="Hayashizaki Y."/>
        </authorList>
    </citation>
    <scope>NUCLEOTIDE SEQUENCE [LARGE SCALE MRNA]</scope>
    <source>
        <strain>C57BL/6J</strain>
        <tissue>Embryo</tissue>
        <tissue>Kidney</tissue>
        <tissue>Small intestine</tissue>
    </source>
</reference>
<reference key="2">
    <citation type="journal article" date="2009" name="PLoS Biol.">
        <title>Lineage-specific biology revealed by a finished genome assembly of the mouse.</title>
        <authorList>
            <person name="Church D.M."/>
            <person name="Goodstadt L."/>
            <person name="Hillier L.W."/>
            <person name="Zody M.C."/>
            <person name="Goldstein S."/>
            <person name="She X."/>
            <person name="Bult C.J."/>
            <person name="Agarwala R."/>
            <person name="Cherry J.L."/>
            <person name="DiCuccio M."/>
            <person name="Hlavina W."/>
            <person name="Kapustin Y."/>
            <person name="Meric P."/>
            <person name="Maglott D."/>
            <person name="Birtle Z."/>
            <person name="Marques A.C."/>
            <person name="Graves T."/>
            <person name="Zhou S."/>
            <person name="Teague B."/>
            <person name="Potamousis K."/>
            <person name="Churas C."/>
            <person name="Place M."/>
            <person name="Herschleb J."/>
            <person name="Runnheim R."/>
            <person name="Forrest D."/>
            <person name="Amos-Landgraf J."/>
            <person name="Schwartz D.C."/>
            <person name="Cheng Z."/>
            <person name="Lindblad-Toh K."/>
            <person name="Eichler E.E."/>
            <person name="Ponting C.P."/>
        </authorList>
    </citation>
    <scope>NUCLEOTIDE SEQUENCE [LARGE SCALE GENOMIC DNA]</scope>
    <source>
        <strain>C57BL/6J</strain>
    </source>
</reference>
<reference key="3">
    <citation type="journal article" date="2004" name="Genome Res.">
        <title>The status, quality, and expansion of the NIH full-length cDNA project: the Mammalian Gene Collection (MGC).</title>
        <authorList>
            <consortium name="The MGC Project Team"/>
        </authorList>
    </citation>
    <scope>NUCLEOTIDE SEQUENCE [LARGE SCALE MRNA]</scope>
    <source>
        <tissue>Brain</tissue>
        <tissue>Oocyte</tissue>
    </source>
</reference>
<reference key="4">
    <citation type="journal article" date="2004" name="Cell Motil. Cytoskeleton">
        <title>The Roadblock light chains are ubiquitous components of cytoplasmic dynein that form homo- and heterodimers.</title>
        <authorList>
            <person name="Nikulina K."/>
            <person name="Patel-King R.S."/>
            <person name="Takebe S."/>
            <person name="Pfister K.K."/>
            <person name="King S.M."/>
        </authorList>
    </citation>
    <scope>SELF-ASSOCIATION</scope>
    <scope>INTERACTION WITH DYNLRB2</scope>
    <scope>IDENTIFICATION IN THE CYTOPLASMIC DYNEIN I COMPLEX</scope>
</reference>
<reference key="5">
    <citation type="journal article" date="2010" name="Cell">
        <title>A tissue-specific atlas of mouse protein phosphorylation and expression.</title>
        <authorList>
            <person name="Huttlin E.L."/>
            <person name="Jedrychowski M.P."/>
            <person name="Elias J.E."/>
            <person name="Goswami T."/>
            <person name="Rad R."/>
            <person name="Beausoleil S.A."/>
            <person name="Villen J."/>
            <person name="Haas W."/>
            <person name="Sowa M.E."/>
            <person name="Gygi S.P."/>
        </authorList>
    </citation>
    <scope>IDENTIFICATION BY MASS SPECTROMETRY [LARGE SCALE ANALYSIS]</scope>
    <source>
        <tissue>Brain</tissue>
        <tissue>Heart</tissue>
        <tissue>Kidney</tissue>
        <tissue>Lung</tissue>
        <tissue>Pancreas</tissue>
        <tissue>Spleen</tissue>
        <tissue>Testis</tissue>
    </source>
</reference>
<reference key="6">
    <citation type="journal article" date="2005" name="J. Mol. Biol.">
        <title>Solution structure of isoform 1 of Roadblock/LC7, a light chain in the dynein complex.</title>
        <authorList>
            <person name="Song J."/>
            <person name="Tyler R.C."/>
            <person name="Lee M.S."/>
            <person name="Tyler E.M."/>
            <person name="Markley J.L."/>
        </authorList>
    </citation>
    <scope>STRUCTURE BY NMR OF 2-96</scope>
    <scope>SUBUNIT</scope>
    <scope>INTERACTION WITH DYNC1I1</scope>
</reference>
<sequence>MAEVEETLKRLQSQKGVQGIIVVNTEGIPIKSTMDNPTTTQYANLMHNFILKARSTVREIDPQNDLTFLRIRSKKNEIMVAPDKDYFLIVIQNPTE</sequence>
<protein>
    <recommendedName>
        <fullName>Dynein light chain roadblock-type 1</fullName>
    </recommendedName>
    <alternativeName>
        <fullName>Dynein light chain 2A, cytoplasmic</fullName>
    </alternativeName>
</protein>
<evidence type="ECO:0000250" key="1">
    <source>
        <dbReference type="UniProtKB" id="P62628"/>
    </source>
</evidence>
<evidence type="ECO:0000250" key="2">
    <source>
        <dbReference type="UniProtKB" id="Q9NP97"/>
    </source>
</evidence>
<evidence type="ECO:0000305" key="3"/>
<evidence type="ECO:0007829" key="4">
    <source>
        <dbReference type="PDB" id="1Y4O"/>
    </source>
</evidence>
<accession>P62627</accession>
<accession>A2AVR8</accession>
<accession>O88567</accession>
<accession>Q4FZJ8</accession>
<accession>Q9D812</accession>
<name>DLRB1_MOUSE</name>